<organism>
    <name type="scientific">Rippkaea orientalis (strain PCC 8801 / RF-1)</name>
    <name type="common">Cyanothece sp. (strain PCC 8801)</name>
    <dbReference type="NCBI Taxonomy" id="41431"/>
    <lineage>
        <taxon>Bacteria</taxon>
        <taxon>Bacillati</taxon>
        <taxon>Cyanobacteriota</taxon>
        <taxon>Cyanophyceae</taxon>
        <taxon>Oscillatoriophycideae</taxon>
        <taxon>Chroococcales</taxon>
        <taxon>Aphanothecaceae</taxon>
        <taxon>Rippkaea</taxon>
        <taxon>Rippkaea orientalis</taxon>
    </lineage>
</organism>
<protein>
    <recommendedName>
        <fullName evidence="1">Photosystem II reaction center protein K</fullName>
        <shortName evidence="1">PSII-K</shortName>
    </recommendedName>
</protein>
<proteinExistence type="inferred from homology"/>
<sequence length="45" mass="5004">MEAALLLAKLPEAYQIFDPLVDVLPIIPLFFLALAFVWQAAVGFK</sequence>
<feature type="propeptide" id="PRO_1000124573" evidence="1">
    <location>
        <begin position="1"/>
        <end position="8"/>
    </location>
</feature>
<feature type="chain" id="PRO_1000124574" description="Photosystem II reaction center protein K" evidence="1">
    <location>
        <begin position="9"/>
        <end position="45"/>
    </location>
</feature>
<feature type="transmembrane region" description="Helical" evidence="1">
    <location>
        <begin position="24"/>
        <end position="44"/>
    </location>
</feature>
<reference key="1">
    <citation type="journal article" date="2011" name="MBio">
        <title>Novel metabolic attributes of the genus Cyanothece, comprising a group of unicellular nitrogen-fixing Cyanobacteria.</title>
        <authorList>
            <person name="Bandyopadhyay A."/>
            <person name="Elvitigala T."/>
            <person name="Welsh E."/>
            <person name="Stockel J."/>
            <person name="Liberton M."/>
            <person name="Min H."/>
            <person name="Sherman L.A."/>
            <person name="Pakrasi H.B."/>
        </authorList>
    </citation>
    <scope>NUCLEOTIDE SEQUENCE [LARGE SCALE GENOMIC DNA]</scope>
    <source>
        <strain>PCC 8801 / RF-1</strain>
    </source>
</reference>
<dbReference type="EMBL" id="CP001287">
    <property type="protein sequence ID" value="ACK64624.1"/>
    <property type="molecule type" value="Genomic_DNA"/>
</dbReference>
<dbReference type="RefSeq" id="WP_012593901.1">
    <property type="nucleotide sequence ID" value="NC_011726.1"/>
</dbReference>
<dbReference type="SMR" id="B7JVQ3"/>
<dbReference type="STRING" id="41431.PCC8801_0533"/>
<dbReference type="KEGG" id="cyp:PCC8801_0533"/>
<dbReference type="eggNOG" id="ENOG5032YQR">
    <property type="taxonomic scope" value="Bacteria"/>
</dbReference>
<dbReference type="HOGENOM" id="CLU_174355_0_0_3"/>
<dbReference type="OrthoDB" id="532552at2"/>
<dbReference type="Proteomes" id="UP000008204">
    <property type="component" value="Chromosome"/>
</dbReference>
<dbReference type="GO" id="GO:0009539">
    <property type="term" value="C:photosystem II reaction center"/>
    <property type="evidence" value="ECO:0007669"/>
    <property type="project" value="InterPro"/>
</dbReference>
<dbReference type="GO" id="GO:0031676">
    <property type="term" value="C:plasma membrane-derived thylakoid membrane"/>
    <property type="evidence" value="ECO:0007669"/>
    <property type="project" value="UniProtKB-SubCell"/>
</dbReference>
<dbReference type="GO" id="GO:0015979">
    <property type="term" value="P:photosynthesis"/>
    <property type="evidence" value="ECO:0007669"/>
    <property type="project" value="UniProtKB-UniRule"/>
</dbReference>
<dbReference type="HAMAP" id="MF_00441">
    <property type="entry name" value="PSII_PsbK"/>
    <property type="match status" value="1"/>
</dbReference>
<dbReference type="InterPro" id="IPR003687">
    <property type="entry name" value="PSII_PsbK"/>
</dbReference>
<dbReference type="InterPro" id="IPR037270">
    <property type="entry name" value="PSII_PsbK_sf"/>
</dbReference>
<dbReference type="NCBIfam" id="NF002715">
    <property type="entry name" value="PRK02553.1"/>
    <property type="match status" value="1"/>
</dbReference>
<dbReference type="PANTHER" id="PTHR35325">
    <property type="match status" value="1"/>
</dbReference>
<dbReference type="PANTHER" id="PTHR35325:SF1">
    <property type="entry name" value="PHOTOSYSTEM II REACTION CENTER PROTEIN K"/>
    <property type="match status" value="1"/>
</dbReference>
<dbReference type="Pfam" id="PF02533">
    <property type="entry name" value="PsbK"/>
    <property type="match status" value="1"/>
</dbReference>
<dbReference type="SUPFAM" id="SSF161037">
    <property type="entry name" value="Photosystem II reaction center protein K, PsbK"/>
    <property type="match status" value="1"/>
</dbReference>
<name>PSBK_RIPO1</name>
<accession>B7JVQ3</accession>
<keyword id="KW-0472">Membrane</keyword>
<keyword id="KW-0602">Photosynthesis</keyword>
<keyword id="KW-0604">Photosystem II</keyword>
<keyword id="KW-0674">Reaction center</keyword>
<keyword id="KW-1185">Reference proteome</keyword>
<keyword id="KW-0793">Thylakoid</keyword>
<keyword id="KW-0812">Transmembrane</keyword>
<keyword id="KW-1133">Transmembrane helix</keyword>
<comment type="function">
    <text evidence="1">One of the components of the core complex of photosystem II (PSII). PSII is a light-driven water:plastoquinone oxidoreductase that uses light energy to abstract electrons from H(2)O, generating O(2) and a proton gradient subsequently used for ATP formation. It consists of a core antenna complex that captures photons, and an electron transfer chain that converts photonic excitation into a charge separation.</text>
</comment>
<comment type="subunit">
    <text evidence="1">PSII is composed of 1 copy each of membrane proteins PsbA, PsbB, PsbC, PsbD, PsbE, PsbF, PsbH, PsbI, PsbJ, PsbK, PsbL, PsbM, PsbT, PsbX, PsbY, PsbZ, Psb30/Ycf12, peripheral proteins PsbO, CyanoQ (PsbQ), PsbU, PsbV and a large number of cofactors. It forms dimeric complexes.</text>
</comment>
<comment type="subcellular location">
    <subcellularLocation>
        <location evidence="1">Cellular thylakoid membrane</location>
        <topology evidence="1">Single-pass membrane protein</topology>
    </subcellularLocation>
</comment>
<comment type="similarity">
    <text evidence="1">Belongs to the PsbK family.</text>
</comment>
<evidence type="ECO:0000255" key="1">
    <source>
        <dbReference type="HAMAP-Rule" id="MF_00441"/>
    </source>
</evidence>
<gene>
    <name evidence="1" type="primary">psbK</name>
    <name type="ordered locus">PCC8801_0533</name>
</gene>